<comment type="catalytic activity">
    <reaction evidence="1">
        <text>urea + 2 H2O + H(+) = hydrogencarbonate + 2 NH4(+)</text>
        <dbReference type="Rhea" id="RHEA:20557"/>
        <dbReference type="ChEBI" id="CHEBI:15377"/>
        <dbReference type="ChEBI" id="CHEBI:15378"/>
        <dbReference type="ChEBI" id="CHEBI:16199"/>
        <dbReference type="ChEBI" id="CHEBI:17544"/>
        <dbReference type="ChEBI" id="CHEBI:28938"/>
        <dbReference type="EC" id="3.5.1.5"/>
    </reaction>
</comment>
<comment type="cofactor">
    <cofactor evidence="1">
        <name>Ni cation</name>
        <dbReference type="ChEBI" id="CHEBI:25516"/>
    </cofactor>
    <text evidence="1">Binds 2 nickel ions per subunit.</text>
</comment>
<comment type="pathway">
    <text evidence="1">Nitrogen metabolism; urea degradation; CO(2) and NH(3) from urea (urease route): step 1/1.</text>
</comment>
<comment type="subunit">
    <text evidence="1">Heterotrimer of UreA (gamma), UreB (beta) and UreC (alpha) subunits. Three heterotrimers associate to form the active enzyme.</text>
</comment>
<comment type="subcellular location">
    <subcellularLocation>
        <location evidence="1">Cytoplasm</location>
    </subcellularLocation>
</comment>
<comment type="PTM">
    <text evidence="1">Carboxylation allows a single lysine to coordinate two nickel ions.</text>
</comment>
<comment type="similarity">
    <text evidence="1">Belongs to the metallo-dependent hydrolases superfamily. Urease alpha subunit family.</text>
</comment>
<dbReference type="EC" id="3.5.1.5" evidence="1"/>
<dbReference type="EMBL" id="BX571857">
    <property type="protein sequence ID" value="CAG43991.1"/>
    <property type="molecule type" value="Genomic_DNA"/>
</dbReference>
<dbReference type="RefSeq" id="WP_000008673.1">
    <property type="nucleotide sequence ID" value="NC_002953.3"/>
</dbReference>
<dbReference type="SMR" id="Q6G732"/>
<dbReference type="MEROPS" id="M38.982"/>
<dbReference type="KEGG" id="sas:SAS2180"/>
<dbReference type="HOGENOM" id="CLU_000980_0_0_9"/>
<dbReference type="UniPathway" id="UPA00258">
    <property type="reaction ID" value="UER00370"/>
</dbReference>
<dbReference type="GO" id="GO:0005737">
    <property type="term" value="C:cytoplasm"/>
    <property type="evidence" value="ECO:0007669"/>
    <property type="project" value="UniProtKB-SubCell"/>
</dbReference>
<dbReference type="GO" id="GO:0016151">
    <property type="term" value="F:nickel cation binding"/>
    <property type="evidence" value="ECO:0007669"/>
    <property type="project" value="UniProtKB-UniRule"/>
</dbReference>
<dbReference type="GO" id="GO:0009039">
    <property type="term" value="F:urease activity"/>
    <property type="evidence" value="ECO:0007669"/>
    <property type="project" value="UniProtKB-UniRule"/>
</dbReference>
<dbReference type="GO" id="GO:0043419">
    <property type="term" value="P:urea catabolic process"/>
    <property type="evidence" value="ECO:0007669"/>
    <property type="project" value="UniProtKB-UniRule"/>
</dbReference>
<dbReference type="CDD" id="cd00375">
    <property type="entry name" value="Urease_alpha"/>
    <property type="match status" value="1"/>
</dbReference>
<dbReference type="Gene3D" id="3.20.20.140">
    <property type="entry name" value="Metal-dependent hydrolases"/>
    <property type="match status" value="1"/>
</dbReference>
<dbReference type="Gene3D" id="2.30.40.10">
    <property type="entry name" value="Urease, subunit C, domain 1"/>
    <property type="match status" value="1"/>
</dbReference>
<dbReference type="HAMAP" id="MF_01953">
    <property type="entry name" value="Urease_alpha"/>
    <property type="match status" value="1"/>
</dbReference>
<dbReference type="InterPro" id="IPR006680">
    <property type="entry name" value="Amidohydro-rel"/>
</dbReference>
<dbReference type="InterPro" id="IPR011059">
    <property type="entry name" value="Metal-dep_hydrolase_composite"/>
</dbReference>
<dbReference type="InterPro" id="IPR032466">
    <property type="entry name" value="Metal_Hydrolase"/>
</dbReference>
<dbReference type="InterPro" id="IPR011612">
    <property type="entry name" value="Urease_alpha_N_dom"/>
</dbReference>
<dbReference type="InterPro" id="IPR050112">
    <property type="entry name" value="Urease_alpha_subunit"/>
</dbReference>
<dbReference type="InterPro" id="IPR017950">
    <property type="entry name" value="Urease_AS"/>
</dbReference>
<dbReference type="InterPro" id="IPR005848">
    <property type="entry name" value="Urease_asu"/>
</dbReference>
<dbReference type="InterPro" id="IPR017951">
    <property type="entry name" value="Urease_asu_c"/>
</dbReference>
<dbReference type="InterPro" id="IPR029754">
    <property type="entry name" value="Urease_Ni-bd"/>
</dbReference>
<dbReference type="NCBIfam" id="NF009686">
    <property type="entry name" value="PRK13207.1"/>
    <property type="match status" value="1"/>
</dbReference>
<dbReference type="NCBIfam" id="TIGR01792">
    <property type="entry name" value="urease_alph"/>
    <property type="match status" value="1"/>
</dbReference>
<dbReference type="PANTHER" id="PTHR43440">
    <property type="entry name" value="UREASE"/>
    <property type="match status" value="1"/>
</dbReference>
<dbReference type="PANTHER" id="PTHR43440:SF1">
    <property type="entry name" value="UREASE"/>
    <property type="match status" value="1"/>
</dbReference>
<dbReference type="Pfam" id="PF01979">
    <property type="entry name" value="Amidohydro_1"/>
    <property type="match status" value="1"/>
</dbReference>
<dbReference type="Pfam" id="PF00449">
    <property type="entry name" value="Urease_alpha"/>
    <property type="match status" value="1"/>
</dbReference>
<dbReference type="PRINTS" id="PR01752">
    <property type="entry name" value="UREASE"/>
</dbReference>
<dbReference type="SUPFAM" id="SSF51338">
    <property type="entry name" value="Composite domain of metallo-dependent hydrolases"/>
    <property type="match status" value="1"/>
</dbReference>
<dbReference type="SUPFAM" id="SSF51556">
    <property type="entry name" value="Metallo-dependent hydrolases"/>
    <property type="match status" value="1"/>
</dbReference>
<dbReference type="PROSITE" id="PS01120">
    <property type="entry name" value="UREASE_1"/>
    <property type="match status" value="1"/>
</dbReference>
<dbReference type="PROSITE" id="PS00145">
    <property type="entry name" value="UREASE_2"/>
    <property type="match status" value="1"/>
</dbReference>
<dbReference type="PROSITE" id="PS51368">
    <property type="entry name" value="UREASE_3"/>
    <property type="match status" value="1"/>
</dbReference>
<accession>Q6G732</accession>
<gene>
    <name evidence="1" type="primary">ureC</name>
    <name type="ordered locus">SAS2180</name>
</gene>
<protein>
    <recommendedName>
        <fullName evidence="1">Urease subunit alpha</fullName>
        <ecNumber evidence="1">3.5.1.5</ecNumber>
    </recommendedName>
    <alternativeName>
        <fullName evidence="1">Urea amidohydrolase subunit alpha</fullName>
    </alternativeName>
</protein>
<organism>
    <name type="scientific">Staphylococcus aureus (strain MSSA476)</name>
    <dbReference type="NCBI Taxonomy" id="282459"/>
    <lineage>
        <taxon>Bacteria</taxon>
        <taxon>Bacillati</taxon>
        <taxon>Bacillota</taxon>
        <taxon>Bacilli</taxon>
        <taxon>Bacillales</taxon>
        <taxon>Staphylococcaceae</taxon>
        <taxon>Staphylococcus</taxon>
    </lineage>
</organism>
<proteinExistence type="inferred from homology"/>
<reference key="1">
    <citation type="journal article" date="2004" name="Proc. Natl. Acad. Sci. U.S.A.">
        <title>Complete genomes of two clinical Staphylococcus aureus strains: evidence for the rapid evolution of virulence and drug resistance.</title>
        <authorList>
            <person name="Holden M.T.G."/>
            <person name="Feil E.J."/>
            <person name="Lindsay J.A."/>
            <person name="Peacock S.J."/>
            <person name="Day N.P.J."/>
            <person name="Enright M.C."/>
            <person name="Foster T.J."/>
            <person name="Moore C.E."/>
            <person name="Hurst L."/>
            <person name="Atkin R."/>
            <person name="Barron A."/>
            <person name="Bason N."/>
            <person name="Bentley S.D."/>
            <person name="Chillingworth C."/>
            <person name="Chillingworth T."/>
            <person name="Churcher C."/>
            <person name="Clark L."/>
            <person name="Corton C."/>
            <person name="Cronin A."/>
            <person name="Doggett J."/>
            <person name="Dowd L."/>
            <person name="Feltwell T."/>
            <person name="Hance Z."/>
            <person name="Harris B."/>
            <person name="Hauser H."/>
            <person name="Holroyd S."/>
            <person name="Jagels K."/>
            <person name="James K.D."/>
            <person name="Lennard N."/>
            <person name="Line A."/>
            <person name="Mayes R."/>
            <person name="Moule S."/>
            <person name="Mungall K."/>
            <person name="Ormond D."/>
            <person name="Quail M.A."/>
            <person name="Rabbinowitsch E."/>
            <person name="Rutherford K.M."/>
            <person name="Sanders M."/>
            <person name="Sharp S."/>
            <person name="Simmonds M."/>
            <person name="Stevens K."/>
            <person name="Whitehead S."/>
            <person name="Barrell B.G."/>
            <person name="Spratt B.G."/>
            <person name="Parkhill J."/>
        </authorList>
    </citation>
    <scope>NUCLEOTIDE SEQUENCE [LARGE SCALE GENOMIC DNA]</scope>
    <source>
        <strain>MSSA476</strain>
    </source>
</reference>
<evidence type="ECO:0000255" key="1">
    <source>
        <dbReference type="HAMAP-Rule" id="MF_01953"/>
    </source>
</evidence>
<name>URE1_STAAS</name>
<sequence>MSFKMTQNQYTSLYGPTVGDSIRLGDTNLFAQIEKDYAVYGEEATFGGGKSIRDGMAQNPRVTRDDVNVADLVISNAVIIDYDKVVKADIGIKNGYIFAIGNAGNPDIMDNVDIIIGSTTDIIAAEGKIVTAGGIDTHVHFINPEQAEVALESGITTHIGGGTGASEGSKATTVTPGPWHIHRMLEAAEGLPINVGFTGKGQATNPTALIEQINAGAIGLKVHEDWGATPSALSHALDVADEFDVQIALHADTLNEAGFMEDTMAAVKDRVLHMYHTEGAGGGHAPDLIKSAAFSNILPSSTNPTLPYTHNTVDEHLDMVMITHHLNAAIPEDIAFADSRIRKETIAAEDVLQDMGVFSMISSDSQAMGRVGEVITRTWQVAHRMKEQRGPLDGDFEHNDNNRIKRYIAKYTINPAITHGISEYVGSIEPGKLADIVLWDPIFFGVKPELVVKGGLINSAVNGDANGSIPTSEPMKYRKMYGQYGGNLTSTSMTFVSKTAYENGINRALNLKRMVRPVKNIRQLSKADMKNNSATPKLDVDPQTYEVYVDGEKITSNAATELPLTQRYFLF</sequence>
<keyword id="KW-0963">Cytoplasm</keyword>
<keyword id="KW-0378">Hydrolase</keyword>
<keyword id="KW-0479">Metal-binding</keyword>
<keyword id="KW-0533">Nickel</keyword>
<feature type="chain" id="PRO_0000067556" description="Urease subunit alpha">
    <location>
        <begin position="1"/>
        <end position="571"/>
    </location>
</feature>
<feature type="domain" description="Urease" evidence="1">
    <location>
        <begin position="133"/>
        <end position="571"/>
    </location>
</feature>
<feature type="active site" description="Proton donor" evidence="1">
    <location>
        <position position="324"/>
    </location>
</feature>
<feature type="binding site" evidence="1">
    <location>
        <position position="138"/>
    </location>
    <ligand>
        <name>Ni(2+)</name>
        <dbReference type="ChEBI" id="CHEBI:49786"/>
        <label>1</label>
    </ligand>
</feature>
<feature type="binding site" evidence="1">
    <location>
        <position position="140"/>
    </location>
    <ligand>
        <name>Ni(2+)</name>
        <dbReference type="ChEBI" id="CHEBI:49786"/>
        <label>1</label>
    </ligand>
</feature>
<feature type="binding site" description="via carbamate group" evidence="1">
    <location>
        <position position="221"/>
    </location>
    <ligand>
        <name>Ni(2+)</name>
        <dbReference type="ChEBI" id="CHEBI:49786"/>
        <label>1</label>
    </ligand>
</feature>
<feature type="binding site" description="via carbamate group" evidence="1">
    <location>
        <position position="221"/>
    </location>
    <ligand>
        <name>Ni(2+)</name>
        <dbReference type="ChEBI" id="CHEBI:49786"/>
        <label>2</label>
    </ligand>
</feature>
<feature type="binding site" evidence="1">
    <location>
        <position position="223"/>
    </location>
    <ligand>
        <name>substrate</name>
    </ligand>
</feature>
<feature type="binding site" evidence="1">
    <location>
        <position position="250"/>
    </location>
    <ligand>
        <name>Ni(2+)</name>
        <dbReference type="ChEBI" id="CHEBI:49786"/>
        <label>2</label>
    </ligand>
</feature>
<feature type="binding site" evidence="1">
    <location>
        <position position="276"/>
    </location>
    <ligand>
        <name>Ni(2+)</name>
        <dbReference type="ChEBI" id="CHEBI:49786"/>
        <label>2</label>
    </ligand>
</feature>
<feature type="binding site" evidence="1">
    <location>
        <position position="364"/>
    </location>
    <ligand>
        <name>Ni(2+)</name>
        <dbReference type="ChEBI" id="CHEBI:49786"/>
        <label>1</label>
    </ligand>
</feature>
<feature type="modified residue" description="N6-carboxylysine" evidence="1">
    <location>
        <position position="221"/>
    </location>
</feature>